<gene>
    <name evidence="1" type="primary">cbpA</name>
    <name type="ordered locus">SG1001</name>
</gene>
<name>CBPA_SALG2</name>
<organism>
    <name type="scientific">Salmonella gallinarum (strain 287/91 / NCTC 13346)</name>
    <dbReference type="NCBI Taxonomy" id="550538"/>
    <lineage>
        <taxon>Bacteria</taxon>
        <taxon>Pseudomonadati</taxon>
        <taxon>Pseudomonadota</taxon>
        <taxon>Gammaproteobacteria</taxon>
        <taxon>Enterobacterales</taxon>
        <taxon>Enterobacteriaceae</taxon>
        <taxon>Salmonella</taxon>
    </lineage>
</organism>
<reference key="1">
    <citation type="journal article" date="2008" name="Genome Res.">
        <title>Comparative genome analysis of Salmonella enteritidis PT4 and Salmonella gallinarum 287/91 provides insights into evolutionary and host adaptation pathways.</title>
        <authorList>
            <person name="Thomson N.R."/>
            <person name="Clayton D.J."/>
            <person name="Windhorst D."/>
            <person name="Vernikos G."/>
            <person name="Davidson S."/>
            <person name="Churcher C."/>
            <person name="Quail M.A."/>
            <person name="Stevens M."/>
            <person name="Jones M.A."/>
            <person name="Watson M."/>
            <person name="Barron A."/>
            <person name="Layton A."/>
            <person name="Pickard D."/>
            <person name="Kingsley R.A."/>
            <person name="Bignell A."/>
            <person name="Clark L."/>
            <person name="Harris B."/>
            <person name="Ormond D."/>
            <person name="Abdellah Z."/>
            <person name="Brooks K."/>
            <person name="Cherevach I."/>
            <person name="Chillingworth T."/>
            <person name="Woodward J."/>
            <person name="Norberczak H."/>
            <person name="Lord A."/>
            <person name="Arrowsmith C."/>
            <person name="Jagels K."/>
            <person name="Moule S."/>
            <person name="Mungall K."/>
            <person name="Saunders M."/>
            <person name="Whitehead S."/>
            <person name="Chabalgoity J.A."/>
            <person name="Maskell D."/>
            <person name="Humphreys T."/>
            <person name="Roberts M."/>
            <person name="Barrow P.A."/>
            <person name="Dougan G."/>
            <person name="Parkhill J."/>
        </authorList>
    </citation>
    <scope>NUCLEOTIDE SEQUENCE [LARGE SCALE GENOMIC DNA]</scope>
    <source>
        <strain>287/91 / NCTC 13346</strain>
    </source>
</reference>
<sequence>MELKDYYAIMGVKPTDDLKTIKTAYRRLARKYHPDVSKEPDAEARFKEVAEAWEVLSDEQRRAEYDQLWQHRNDPQFNRQFQQHEGQPYNAEDFDDIFSSIFGQHGRHSHHRHAARGHDIEIEVAVFLEETLEEHQRTISYSVPVYNAFGLVEREIPKTLNVKIPAGVSNGQRIRLKGQGTPGENGGPNGDLWLVIHIAPHPLFDIVNQDLEVVLPLAPWEAALGAKVSVPTLKERILLTIPPGSQAGQRLRIKGKGLASKKHTGDLYAIIKIVMPPKPDEKTAALWQQLADAQSSFDPRQQWGKA</sequence>
<comment type="function">
    <text evidence="1">DNA-binding protein that preferentially recognizes a curved DNA sequence. It is probably a functional analog of DnaJ; displays overlapping activities with DnaJ, but functions under different conditions, probably acting as a molecular chaperone in an adaptive response to environmental stresses other than heat shock. Lacks autonomous chaperone activity; binds native substrates and targets them for recognition by DnaK. Its activity is inhibited by the binding of CbpM.</text>
</comment>
<comment type="subcellular location">
    <subcellularLocation>
        <location evidence="1">Cytoplasm</location>
        <location evidence="1">Nucleoid</location>
    </subcellularLocation>
</comment>
<dbReference type="EMBL" id="AM933173">
    <property type="protein sequence ID" value="CAR36890.1"/>
    <property type="molecule type" value="Genomic_DNA"/>
</dbReference>
<dbReference type="RefSeq" id="WP_000420603.1">
    <property type="nucleotide sequence ID" value="NC_011274.1"/>
</dbReference>
<dbReference type="SMR" id="B5R6G3"/>
<dbReference type="KEGG" id="seg:SG1001"/>
<dbReference type="HOGENOM" id="CLU_017633_0_0_6"/>
<dbReference type="Proteomes" id="UP000008321">
    <property type="component" value="Chromosome"/>
</dbReference>
<dbReference type="GO" id="GO:0005737">
    <property type="term" value="C:cytoplasm"/>
    <property type="evidence" value="ECO:0007669"/>
    <property type="project" value="UniProtKB-UniRule"/>
</dbReference>
<dbReference type="GO" id="GO:0009295">
    <property type="term" value="C:nucleoid"/>
    <property type="evidence" value="ECO:0007669"/>
    <property type="project" value="UniProtKB-SubCell"/>
</dbReference>
<dbReference type="GO" id="GO:0003681">
    <property type="term" value="F:bent DNA binding"/>
    <property type="evidence" value="ECO:0007669"/>
    <property type="project" value="UniProtKB-UniRule"/>
</dbReference>
<dbReference type="GO" id="GO:0051082">
    <property type="term" value="F:unfolded protein binding"/>
    <property type="evidence" value="ECO:0007669"/>
    <property type="project" value="InterPro"/>
</dbReference>
<dbReference type="GO" id="GO:0051085">
    <property type="term" value="P:chaperone cofactor-dependent protein refolding"/>
    <property type="evidence" value="ECO:0007669"/>
    <property type="project" value="TreeGrafter"/>
</dbReference>
<dbReference type="GO" id="GO:0042026">
    <property type="term" value="P:protein refolding"/>
    <property type="evidence" value="ECO:0007669"/>
    <property type="project" value="TreeGrafter"/>
</dbReference>
<dbReference type="CDD" id="cd06257">
    <property type="entry name" value="DnaJ"/>
    <property type="match status" value="1"/>
</dbReference>
<dbReference type="CDD" id="cd10747">
    <property type="entry name" value="DnaJ_C"/>
    <property type="match status" value="1"/>
</dbReference>
<dbReference type="FunFam" id="1.10.287.110:FF:000013">
    <property type="entry name" value="Curved DNA-binding protein"/>
    <property type="match status" value="1"/>
</dbReference>
<dbReference type="FunFam" id="2.60.260.20:FF:000008">
    <property type="entry name" value="Curved DNA-binding protein"/>
    <property type="match status" value="1"/>
</dbReference>
<dbReference type="Gene3D" id="1.10.287.110">
    <property type="entry name" value="DnaJ domain"/>
    <property type="match status" value="1"/>
</dbReference>
<dbReference type="Gene3D" id="1.20.5.460">
    <property type="entry name" value="Single helix bin"/>
    <property type="match status" value="1"/>
</dbReference>
<dbReference type="Gene3D" id="2.60.260.20">
    <property type="entry name" value="Urease metallochaperone UreE, N-terminal domain"/>
    <property type="match status" value="2"/>
</dbReference>
<dbReference type="HAMAP" id="MF_01154">
    <property type="entry name" value="CbpA"/>
    <property type="match status" value="1"/>
</dbReference>
<dbReference type="InterPro" id="IPR023859">
    <property type="entry name" value="DNA-bd_curved-DNA"/>
</dbReference>
<dbReference type="InterPro" id="IPR002939">
    <property type="entry name" value="DnaJ_C"/>
</dbReference>
<dbReference type="InterPro" id="IPR001623">
    <property type="entry name" value="DnaJ_domain"/>
</dbReference>
<dbReference type="InterPro" id="IPR018253">
    <property type="entry name" value="DnaJ_domain_CS"/>
</dbReference>
<dbReference type="InterPro" id="IPR008971">
    <property type="entry name" value="HSP40/DnaJ_pept-bd"/>
</dbReference>
<dbReference type="InterPro" id="IPR036869">
    <property type="entry name" value="J_dom_sf"/>
</dbReference>
<dbReference type="NCBIfam" id="NF007618">
    <property type="entry name" value="PRK10266.1"/>
    <property type="match status" value="1"/>
</dbReference>
<dbReference type="PANTHER" id="PTHR43096">
    <property type="entry name" value="DNAJ HOMOLOG 1, MITOCHONDRIAL-RELATED"/>
    <property type="match status" value="1"/>
</dbReference>
<dbReference type="PANTHER" id="PTHR43096:SF52">
    <property type="entry name" value="DNAJ HOMOLOG 1, MITOCHONDRIAL-RELATED"/>
    <property type="match status" value="1"/>
</dbReference>
<dbReference type="Pfam" id="PF00226">
    <property type="entry name" value="DnaJ"/>
    <property type="match status" value="1"/>
</dbReference>
<dbReference type="Pfam" id="PF01556">
    <property type="entry name" value="DnaJ_C"/>
    <property type="match status" value="1"/>
</dbReference>
<dbReference type="PRINTS" id="PR00625">
    <property type="entry name" value="JDOMAIN"/>
</dbReference>
<dbReference type="SMART" id="SM00271">
    <property type="entry name" value="DnaJ"/>
    <property type="match status" value="1"/>
</dbReference>
<dbReference type="SUPFAM" id="SSF46565">
    <property type="entry name" value="Chaperone J-domain"/>
    <property type="match status" value="1"/>
</dbReference>
<dbReference type="SUPFAM" id="SSF49493">
    <property type="entry name" value="HSP40/DnaJ peptide-binding domain"/>
    <property type="match status" value="2"/>
</dbReference>
<dbReference type="PROSITE" id="PS00636">
    <property type="entry name" value="DNAJ_1"/>
    <property type="match status" value="1"/>
</dbReference>
<dbReference type="PROSITE" id="PS50076">
    <property type="entry name" value="DNAJ_2"/>
    <property type="match status" value="1"/>
</dbReference>
<protein>
    <recommendedName>
        <fullName evidence="1">Curved DNA-binding protein</fullName>
    </recommendedName>
</protein>
<keyword id="KW-0143">Chaperone</keyword>
<keyword id="KW-0963">Cytoplasm</keyword>
<keyword id="KW-0238">DNA-binding</keyword>
<accession>B5R6G3</accession>
<feature type="chain" id="PRO_1000137758" description="Curved DNA-binding protein">
    <location>
        <begin position="1"/>
        <end position="306"/>
    </location>
</feature>
<feature type="domain" description="J" evidence="1">
    <location>
        <begin position="5"/>
        <end position="69"/>
    </location>
</feature>
<evidence type="ECO:0000255" key="1">
    <source>
        <dbReference type="HAMAP-Rule" id="MF_01154"/>
    </source>
</evidence>
<proteinExistence type="inferred from homology"/>